<dbReference type="EC" id="7.1.1.-" evidence="1"/>
<dbReference type="EMBL" id="CP001124">
    <property type="protein sequence ID" value="ACH40916.1"/>
    <property type="molecule type" value="Genomic_DNA"/>
</dbReference>
<dbReference type="RefSeq" id="WP_012532350.1">
    <property type="nucleotide sequence ID" value="NC_011146.1"/>
</dbReference>
<dbReference type="SMR" id="B5EFG1"/>
<dbReference type="STRING" id="404380.Gbem_3924"/>
<dbReference type="KEGG" id="gbm:Gbem_3924"/>
<dbReference type="eggNOG" id="COG0852">
    <property type="taxonomic scope" value="Bacteria"/>
</dbReference>
<dbReference type="HOGENOM" id="CLU_042628_6_0_7"/>
<dbReference type="OrthoDB" id="9803286at2"/>
<dbReference type="Proteomes" id="UP000008825">
    <property type="component" value="Chromosome"/>
</dbReference>
<dbReference type="GO" id="GO:0005886">
    <property type="term" value="C:plasma membrane"/>
    <property type="evidence" value="ECO:0007669"/>
    <property type="project" value="UniProtKB-SubCell"/>
</dbReference>
<dbReference type="GO" id="GO:0008137">
    <property type="term" value="F:NADH dehydrogenase (ubiquinone) activity"/>
    <property type="evidence" value="ECO:0007669"/>
    <property type="project" value="InterPro"/>
</dbReference>
<dbReference type="GO" id="GO:0050136">
    <property type="term" value="F:NADH:ubiquinone reductase (non-electrogenic) activity"/>
    <property type="evidence" value="ECO:0007669"/>
    <property type="project" value="UniProtKB-UniRule"/>
</dbReference>
<dbReference type="GO" id="GO:0048038">
    <property type="term" value="F:quinone binding"/>
    <property type="evidence" value="ECO:0007669"/>
    <property type="project" value="UniProtKB-KW"/>
</dbReference>
<dbReference type="Gene3D" id="3.30.460.80">
    <property type="entry name" value="NADH:ubiquinone oxidoreductase, 30kDa subunit"/>
    <property type="match status" value="1"/>
</dbReference>
<dbReference type="HAMAP" id="MF_01357">
    <property type="entry name" value="NDH1_NuoC"/>
    <property type="match status" value="1"/>
</dbReference>
<dbReference type="InterPro" id="IPR010218">
    <property type="entry name" value="NADH_DH_suC"/>
</dbReference>
<dbReference type="InterPro" id="IPR037232">
    <property type="entry name" value="NADH_quin_OxRdtase_su_C/D-like"/>
</dbReference>
<dbReference type="InterPro" id="IPR001268">
    <property type="entry name" value="NADH_UbQ_OxRdtase_30kDa_su"/>
</dbReference>
<dbReference type="NCBIfam" id="TIGR01961">
    <property type="entry name" value="NuoC_fam"/>
    <property type="match status" value="1"/>
</dbReference>
<dbReference type="PANTHER" id="PTHR10884:SF14">
    <property type="entry name" value="NADH DEHYDROGENASE [UBIQUINONE] IRON-SULFUR PROTEIN 3, MITOCHONDRIAL"/>
    <property type="match status" value="1"/>
</dbReference>
<dbReference type="PANTHER" id="PTHR10884">
    <property type="entry name" value="NADH DEHYDROGENASE UBIQUINONE IRON-SULFUR PROTEIN 3"/>
    <property type="match status" value="1"/>
</dbReference>
<dbReference type="Pfam" id="PF00329">
    <property type="entry name" value="Complex1_30kDa"/>
    <property type="match status" value="1"/>
</dbReference>
<dbReference type="SUPFAM" id="SSF143243">
    <property type="entry name" value="Nqo5-like"/>
    <property type="match status" value="1"/>
</dbReference>
<accession>B5EFG1</accession>
<keyword id="KW-0997">Cell inner membrane</keyword>
<keyword id="KW-1003">Cell membrane</keyword>
<keyword id="KW-0472">Membrane</keyword>
<keyword id="KW-0520">NAD</keyword>
<keyword id="KW-0874">Quinone</keyword>
<keyword id="KW-1185">Reference proteome</keyword>
<keyword id="KW-1278">Translocase</keyword>
<keyword id="KW-0813">Transport</keyword>
<keyword id="KW-0830">Ubiquinone</keyword>
<name>NUOC_CITBB</name>
<feature type="chain" id="PRO_0000358104" description="NADH-quinone oxidoreductase subunit C">
    <location>
        <begin position="1"/>
        <end position="161"/>
    </location>
</feature>
<protein>
    <recommendedName>
        <fullName evidence="1">NADH-quinone oxidoreductase subunit C</fullName>
        <ecNumber evidence="1">7.1.1.-</ecNumber>
    </recommendedName>
    <alternativeName>
        <fullName evidence="1">NADH dehydrogenase I subunit C</fullName>
    </alternativeName>
    <alternativeName>
        <fullName evidence="1">NDH-1 subunit C</fullName>
    </alternativeName>
</protein>
<proteinExistence type="inferred from homology"/>
<organism>
    <name type="scientific">Citrifermentans bemidjiense (strain ATCC BAA-1014 / DSM 16622 / JCM 12645 / Bem)</name>
    <name type="common">Geobacter bemidjiensis</name>
    <dbReference type="NCBI Taxonomy" id="404380"/>
    <lineage>
        <taxon>Bacteria</taxon>
        <taxon>Pseudomonadati</taxon>
        <taxon>Thermodesulfobacteriota</taxon>
        <taxon>Desulfuromonadia</taxon>
        <taxon>Geobacterales</taxon>
        <taxon>Geobacteraceae</taxon>
        <taxon>Citrifermentans</taxon>
    </lineage>
</organism>
<evidence type="ECO:0000255" key="1">
    <source>
        <dbReference type="HAMAP-Rule" id="MF_01357"/>
    </source>
</evidence>
<gene>
    <name evidence="1" type="primary">nuoC</name>
    <name type="ordered locus">Gbem_3924</name>
</gene>
<sequence length="161" mass="18695">MAENNRAVVKLKERFANALLDCTEYRGEVTVTVKKENILEVLKCLRDDLRYNFLTDVTAVDYLGQDPRFMVVYHLMSIPNKDRIRVKAPLTEADCSIDSATALWNSADWVEREAYDMFGIDFKNHPNLVRILMTDDWVGHPLRKDYPLQGPDREPYKGRLS</sequence>
<reference key="1">
    <citation type="submission" date="2008-07" db="EMBL/GenBank/DDBJ databases">
        <title>Complete sequence of Geobacter bemidjiensis BEM.</title>
        <authorList>
            <consortium name="US DOE Joint Genome Institute"/>
            <person name="Lucas S."/>
            <person name="Copeland A."/>
            <person name="Lapidus A."/>
            <person name="Glavina del Rio T."/>
            <person name="Dalin E."/>
            <person name="Tice H."/>
            <person name="Bruce D."/>
            <person name="Goodwin L."/>
            <person name="Pitluck S."/>
            <person name="Kiss H."/>
            <person name="Brettin T."/>
            <person name="Detter J.C."/>
            <person name="Han C."/>
            <person name="Kuske C.R."/>
            <person name="Schmutz J."/>
            <person name="Larimer F."/>
            <person name="Land M."/>
            <person name="Hauser L."/>
            <person name="Kyrpides N."/>
            <person name="Lykidis A."/>
            <person name="Lovley D."/>
            <person name="Richardson P."/>
        </authorList>
    </citation>
    <scope>NUCLEOTIDE SEQUENCE [LARGE SCALE GENOMIC DNA]</scope>
    <source>
        <strain>ATCC BAA-1014 / DSM 16622 / JCM 12645 / Bem</strain>
    </source>
</reference>
<comment type="function">
    <text evidence="1">NDH-1 shuttles electrons from NADH, via FMN and iron-sulfur (Fe-S) centers, to quinones in the respiratory chain. The immediate electron acceptor for the enzyme in this species is believed to be ubiquinone. Couples the redox reaction to proton translocation (for every two electrons transferred, four hydrogen ions are translocated across the cytoplasmic membrane), and thus conserves the redox energy in a proton gradient.</text>
</comment>
<comment type="catalytic activity">
    <reaction evidence="1">
        <text>a quinone + NADH + 5 H(+)(in) = a quinol + NAD(+) + 4 H(+)(out)</text>
        <dbReference type="Rhea" id="RHEA:57888"/>
        <dbReference type="ChEBI" id="CHEBI:15378"/>
        <dbReference type="ChEBI" id="CHEBI:24646"/>
        <dbReference type="ChEBI" id="CHEBI:57540"/>
        <dbReference type="ChEBI" id="CHEBI:57945"/>
        <dbReference type="ChEBI" id="CHEBI:132124"/>
    </reaction>
</comment>
<comment type="subunit">
    <text evidence="1">NDH-1 is composed of 14 different subunits. Subunits NuoB, C, D, E, F, and G constitute the peripheral sector of the complex.</text>
</comment>
<comment type="subcellular location">
    <subcellularLocation>
        <location evidence="1">Cell inner membrane</location>
        <topology evidence="1">Peripheral membrane protein</topology>
        <orientation evidence="1">Cytoplasmic side</orientation>
    </subcellularLocation>
</comment>
<comment type="similarity">
    <text evidence="1">Belongs to the complex I 30 kDa subunit family.</text>
</comment>